<sequence>MFEYLKGTVADILIDKIIVEVNGIGYRIHSTIHSVSQIKKGDAITVYTHLVVREDELSLYGFMSIEELDMFQKLISVSKIGPKVASGILSAYTPNKLSAYILSKDISALSKAPGVGKKTAERIILELKDKVDKTNVVYDYTLFNDDHKDDDEAVQALMALGYSKLESEKAVEAVRDMSLGTEDVIKRALKWLMK</sequence>
<keyword id="KW-0963">Cytoplasm</keyword>
<keyword id="KW-0227">DNA damage</keyword>
<keyword id="KW-0233">DNA recombination</keyword>
<keyword id="KW-0234">DNA repair</keyword>
<keyword id="KW-0238">DNA-binding</keyword>
<keyword id="KW-1185">Reference proteome</keyword>
<gene>
    <name evidence="1" type="primary">ruvA</name>
    <name type="ordered locus">Clos_1726</name>
</gene>
<organism>
    <name type="scientific">Alkaliphilus oremlandii (strain OhILAs)</name>
    <name type="common">Clostridium oremlandii (strain OhILAs)</name>
    <dbReference type="NCBI Taxonomy" id="350688"/>
    <lineage>
        <taxon>Bacteria</taxon>
        <taxon>Bacillati</taxon>
        <taxon>Bacillota</taxon>
        <taxon>Clostridia</taxon>
        <taxon>Peptostreptococcales</taxon>
        <taxon>Natronincolaceae</taxon>
        <taxon>Alkaliphilus</taxon>
    </lineage>
</organism>
<evidence type="ECO:0000255" key="1">
    <source>
        <dbReference type="HAMAP-Rule" id="MF_00031"/>
    </source>
</evidence>
<feature type="chain" id="PRO_1000057233" description="Holliday junction branch migration complex subunit RuvA">
    <location>
        <begin position="1"/>
        <end position="194"/>
    </location>
</feature>
<feature type="region of interest" description="Domain I" evidence="1">
    <location>
        <begin position="1"/>
        <end position="63"/>
    </location>
</feature>
<feature type="region of interest" description="Domain II" evidence="1">
    <location>
        <begin position="64"/>
        <end position="142"/>
    </location>
</feature>
<feature type="region of interest" description="Flexible linker" evidence="1">
    <location>
        <begin position="143"/>
        <end position="151"/>
    </location>
</feature>
<feature type="region of interest" description="Domain III" evidence="1">
    <location>
        <begin position="151"/>
        <end position="194"/>
    </location>
</feature>
<dbReference type="EMBL" id="CP000853">
    <property type="protein sequence ID" value="ABW19266.1"/>
    <property type="molecule type" value="Genomic_DNA"/>
</dbReference>
<dbReference type="RefSeq" id="WP_012159578.1">
    <property type="nucleotide sequence ID" value="NC_009922.1"/>
</dbReference>
<dbReference type="SMR" id="A8MHI4"/>
<dbReference type="STRING" id="350688.Clos_1726"/>
<dbReference type="KEGG" id="aoe:Clos_1726"/>
<dbReference type="eggNOG" id="COG0632">
    <property type="taxonomic scope" value="Bacteria"/>
</dbReference>
<dbReference type="HOGENOM" id="CLU_087936_3_0_9"/>
<dbReference type="OrthoDB" id="5293449at2"/>
<dbReference type="Proteomes" id="UP000000269">
    <property type="component" value="Chromosome"/>
</dbReference>
<dbReference type="GO" id="GO:0005737">
    <property type="term" value="C:cytoplasm"/>
    <property type="evidence" value="ECO:0007669"/>
    <property type="project" value="UniProtKB-SubCell"/>
</dbReference>
<dbReference type="GO" id="GO:0009379">
    <property type="term" value="C:Holliday junction helicase complex"/>
    <property type="evidence" value="ECO:0007669"/>
    <property type="project" value="InterPro"/>
</dbReference>
<dbReference type="GO" id="GO:0048476">
    <property type="term" value="C:Holliday junction resolvase complex"/>
    <property type="evidence" value="ECO:0007669"/>
    <property type="project" value="UniProtKB-UniRule"/>
</dbReference>
<dbReference type="GO" id="GO:0005524">
    <property type="term" value="F:ATP binding"/>
    <property type="evidence" value="ECO:0007669"/>
    <property type="project" value="InterPro"/>
</dbReference>
<dbReference type="GO" id="GO:0000400">
    <property type="term" value="F:four-way junction DNA binding"/>
    <property type="evidence" value="ECO:0007669"/>
    <property type="project" value="UniProtKB-UniRule"/>
</dbReference>
<dbReference type="GO" id="GO:0009378">
    <property type="term" value="F:four-way junction helicase activity"/>
    <property type="evidence" value="ECO:0007669"/>
    <property type="project" value="InterPro"/>
</dbReference>
<dbReference type="GO" id="GO:0006310">
    <property type="term" value="P:DNA recombination"/>
    <property type="evidence" value="ECO:0007669"/>
    <property type="project" value="UniProtKB-UniRule"/>
</dbReference>
<dbReference type="GO" id="GO:0006281">
    <property type="term" value="P:DNA repair"/>
    <property type="evidence" value="ECO:0007669"/>
    <property type="project" value="UniProtKB-UniRule"/>
</dbReference>
<dbReference type="CDD" id="cd14332">
    <property type="entry name" value="UBA_RuvA_C"/>
    <property type="match status" value="1"/>
</dbReference>
<dbReference type="Gene3D" id="1.10.150.20">
    <property type="entry name" value="5' to 3' exonuclease, C-terminal subdomain"/>
    <property type="match status" value="1"/>
</dbReference>
<dbReference type="Gene3D" id="1.10.8.10">
    <property type="entry name" value="DNA helicase RuvA subunit, C-terminal domain"/>
    <property type="match status" value="1"/>
</dbReference>
<dbReference type="Gene3D" id="2.40.50.140">
    <property type="entry name" value="Nucleic acid-binding proteins"/>
    <property type="match status" value="1"/>
</dbReference>
<dbReference type="HAMAP" id="MF_00031">
    <property type="entry name" value="DNA_HJ_migration_RuvA"/>
    <property type="match status" value="1"/>
</dbReference>
<dbReference type="InterPro" id="IPR013849">
    <property type="entry name" value="DNA_helicase_Holl-junc_RuvA_I"/>
</dbReference>
<dbReference type="InterPro" id="IPR003583">
    <property type="entry name" value="Hlx-hairpin-Hlx_DNA-bd_motif"/>
</dbReference>
<dbReference type="InterPro" id="IPR012340">
    <property type="entry name" value="NA-bd_OB-fold"/>
</dbReference>
<dbReference type="InterPro" id="IPR000085">
    <property type="entry name" value="RuvA"/>
</dbReference>
<dbReference type="InterPro" id="IPR010994">
    <property type="entry name" value="RuvA_2-like"/>
</dbReference>
<dbReference type="InterPro" id="IPR011114">
    <property type="entry name" value="RuvA_C"/>
</dbReference>
<dbReference type="InterPro" id="IPR036267">
    <property type="entry name" value="RuvA_C_sf"/>
</dbReference>
<dbReference type="NCBIfam" id="TIGR00084">
    <property type="entry name" value="ruvA"/>
    <property type="match status" value="1"/>
</dbReference>
<dbReference type="Pfam" id="PF14520">
    <property type="entry name" value="HHH_5"/>
    <property type="match status" value="1"/>
</dbReference>
<dbReference type="Pfam" id="PF07499">
    <property type="entry name" value="RuvA_C"/>
    <property type="match status" value="1"/>
</dbReference>
<dbReference type="Pfam" id="PF01330">
    <property type="entry name" value="RuvA_N"/>
    <property type="match status" value="1"/>
</dbReference>
<dbReference type="SMART" id="SM00278">
    <property type="entry name" value="HhH1"/>
    <property type="match status" value="2"/>
</dbReference>
<dbReference type="SUPFAM" id="SSF46929">
    <property type="entry name" value="DNA helicase RuvA subunit, C-terminal domain"/>
    <property type="match status" value="1"/>
</dbReference>
<dbReference type="SUPFAM" id="SSF50249">
    <property type="entry name" value="Nucleic acid-binding proteins"/>
    <property type="match status" value="1"/>
</dbReference>
<dbReference type="SUPFAM" id="SSF47781">
    <property type="entry name" value="RuvA domain 2-like"/>
    <property type="match status" value="1"/>
</dbReference>
<accession>A8MHI4</accession>
<protein>
    <recommendedName>
        <fullName evidence="1">Holliday junction branch migration complex subunit RuvA</fullName>
    </recommendedName>
</protein>
<reference key="1">
    <citation type="submission" date="2007-10" db="EMBL/GenBank/DDBJ databases">
        <title>Complete genome of Alkaliphilus oremlandii OhILAs.</title>
        <authorList>
            <person name="Copeland A."/>
            <person name="Lucas S."/>
            <person name="Lapidus A."/>
            <person name="Barry K."/>
            <person name="Detter J.C."/>
            <person name="Glavina del Rio T."/>
            <person name="Hammon N."/>
            <person name="Israni S."/>
            <person name="Dalin E."/>
            <person name="Tice H."/>
            <person name="Pitluck S."/>
            <person name="Chain P."/>
            <person name="Malfatti S."/>
            <person name="Shin M."/>
            <person name="Vergez L."/>
            <person name="Schmutz J."/>
            <person name="Larimer F."/>
            <person name="Land M."/>
            <person name="Hauser L."/>
            <person name="Kyrpides N."/>
            <person name="Mikhailova N."/>
            <person name="Stolz J.F."/>
            <person name="Dawson A."/>
            <person name="Fisher E."/>
            <person name="Crable B."/>
            <person name="Perera E."/>
            <person name="Lisak J."/>
            <person name="Ranganathan M."/>
            <person name="Basu P."/>
            <person name="Richardson P."/>
        </authorList>
    </citation>
    <scope>NUCLEOTIDE SEQUENCE [LARGE SCALE GENOMIC DNA]</scope>
    <source>
        <strain>OhILAs</strain>
    </source>
</reference>
<comment type="function">
    <text evidence="1">The RuvA-RuvB-RuvC complex processes Holliday junction (HJ) DNA during genetic recombination and DNA repair, while the RuvA-RuvB complex plays an important role in the rescue of blocked DNA replication forks via replication fork reversal (RFR). RuvA specifically binds to HJ cruciform DNA, conferring on it an open structure. The RuvB hexamer acts as an ATP-dependent pump, pulling dsDNA into and through the RuvAB complex. HJ branch migration allows RuvC to scan DNA until it finds its consensus sequence, where it cleaves and resolves the cruciform DNA.</text>
</comment>
<comment type="subunit">
    <text evidence="1">Homotetramer. Forms an RuvA(8)-RuvB(12)-Holliday junction (HJ) complex. HJ DNA is sandwiched between 2 RuvA tetramers; dsDNA enters through RuvA and exits via RuvB. An RuvB hexamer assembles on each DNA strand where it exits the tetramer. Each RuvB hexamer is contacted by two RuvA subunits (via domain III) on 2 adjacent RuvB subunits; this complex drives branch migration. In the full resolvosome a probable DNA-RuvA(4)-RuvB(12)-RuvC(2) complex forms which resolves the HJ.</text>
</comment>
<comment type="subcellular location">
    <subcellularLocation>
        <location evidence="1">Cytoplasm</location>
    </subcellularLocation>
</comment>
<comment type="domain">
    <text evidence="1">Has three domains with a flexible linker between the domains II and III and assumes an 'L' shape. Domain III is highly mobile and contacts RuvB.</text>
</comment>
<comment type="similarity">
    <text evidence="1">Belongs to the RuvA family.</text>
</comment>
<name>RUVA_ALKOO</name>
<proteinExistence type="inferred from homology"/>